<proteinExistence type="inferred from homology"/>
<name>PDXJ_AQUPY</name>
<feature type="chain" id="PRO_0000190107" description="Pyridoxine 5'-phosphate synthase">
    <location>
        <begin position="1"/>
        <end position="236" status="greater than"/>
    </location>
</feature>
<feature type="active site" description="Proton acceptor" evidence="1">
    <location>
        <position position="42"/>
    </location>
</feature>
<feature type="active site" description="Proton acceptor" evidence="1">
    <location>
        <position position="69"/>
    </location>
</feature>
<feature type="active site" description="Proton donor" evidence="1">
    <location>
        <position position="192"/>
    </location>
</feature>
<feature type="binding site" evidence="1">
    <location>
        <position position="6"/>
    </location>
    <ligand>
        <name>3-amino-2-oxopropyl phosphate</name>
        <dbReference type="ChEBI" id="CHEBI:57279"/>
    </ligand>
</feature>
<feature type="binding site" evidence="1">
    <location>
        <begin position="8"/>
        <end position="9"/>
    </location>
    <ligand>
        <name>1-deoxy-D-xylulose 5-phosphate</name>
        <dbReference type="ChEBI" id="CHEBI:57792"/>
    </ligand>
</feature>
<feature type="binding site" evidence="1">
    <location>
        <position position="17"/>
    </location>
    <ligand>
        <name>3-amino-2-oxopropyl phosphate</name>
        <dbReference type="ChEBI" id="CHEBI:57279"/>
    </ligand>
</feature>
<feature type="binding site" evidence="1">
    <location>
        <position position="44"/>
    </location>
    <ligand>
        <name>1-deoxy-D-xylulose 5-phosphate</name>
        <dbReference type="ChEBI" id="CHEBI:57792"/>
    </ligand>
</feature>
<feature type="binding site" evidence="1">
    <location>
        <position position="49"/>
    </location>
    <ligand>
        <name>1-deoxy-D-xylulose 5-phosphate</name>
        <dbReference type="ChEBI" id="CHEBI:57792"/>
    </ligand>
</feature>
<feature type="binding site" evidence="1">
    <location>
        <position position="99"/>
    </location>
    <ligand>
        <name>1-deoxy-D-xylulose 5-phosphate</name>
        <dbReference type="ChEBI" id="CHEBI:57792"/>
    </ligand>
</feature>
<feature type="binding site" evidence="1">
    <location>
        <position position="193"/>
    </location>
    <ligand>
        <name>3-amino-2-oxopropyl phosphate</name>
        <dbReference type="ChEBI" id="CHEBI:57279"/>
    </ligand>
</feature>
<feature type="binding site" evidence="1">
    <location>
        <begin position="216"/>
        <end position="217"/>
    </location>
    <ligand>
        <name>3-amino-2-oxopropyl phosphate</name>
        <dbReference type="ChEBI" id="CHEBI:57279"/>
    </ligand>
</feature>
<feature type="site" description="Transition state stabilizer" evidence="1">
    <location>
        <position position="150"/>
    </location>
</feature>
<feature type="non-terminal residue">
    <location>
        <position position="236"/>
    </location>
</feature>
<accession>P46212</accession>
<keyword id="KW-0963">Cytoplasm</keyword>
<keyword id="KW-0664">Pyridoxine biosynthesis</keyword>
<keyword id="KW-0808">Transferase</keyword>
<evidence type="ECO:0000255" key="1">
    <source>
        <dbReference type="HAMAP-Rule" id="MF_00279"/>
    </source>
</evidence>
<dbReference type="EC" id="2.6.99.2" evidence="1"/>
<dbReference type="EMBL" id="X74277">
    <property type="protein sequence ID" value="CAA52337.1"/>
    <property type="molecule type" value="Genomic_DNA"/>
</dbReference>
<dbReference type="SMR" id="P46212"/>
<dbReference type="UniPathway" id="UPA00244">
    <property type="reaction ID" value="UER00313"/>
</dbReference>
<dbReference type="GO" id="GO:0005829">
    <property type="term" value="C:cytosol"/>
    <property type="evidence" value="ECO:0007669"/>
    <property type="project" value="TreeGrafter"/>
</dbReference>
<dbReference type="GO" id="GO:0033856">
    <property type="term" value="F:pyridoxine 5'-phosphate synthase activity"/>
    <property type="evidence" value="ECO:0007669"/>
    <property type="project" value="UniProtKB-EC"/>
</dbReference>
<dbReference type="GO" id="GO:0008615">
    <property type="term" value="P:pyridoxine biosynthetic process"/>
    <property type="evidence" value="ECO:0007669"/>
    <property type="project" value="UniProtKB-KW"/>
</dbReference>
<dbReference type="CDD" id="cd00003">
    <property type="entry name" value="PNPsynthase"/>
    <property type="match status" value="1"/>
</dbReference>
<dbReference type="Gene3D" id="3.20.20.70">
    <property type="entry name" value="Aldolase class I"/>
    <property type="match status" value="1"/>
</dbReference>
<dbReference type="HAMAP" id="MF_00279">
    <property type="entry name" value="PdxJ"/>
    <property type="match status" value="1"/>
</dbReference>
<dbReference type="InterPro" id="IPR013785">
    <property type="entry name" value="Aldolase_TIM"/>
</dbReference>
<dbReference type="InterPro" id="IPR004569">
    <property type="entry name" value="PyrdxlP_synth_PdxJ"/>
</dbReference>
<dbReference type="InterPro" id="IPR036130">
    <property type="entry name" value="Pyridoxine-5'_phos_synth"/>
</dbReference>
<dbReference type="NCBIfam" id="TIGR00559">
    <property type="entry name" value="pdxJ"/>
    <property type="match status" value="1"/>
</dbReference>
<dbReference type="NCBIfam" id="NF003625">
    <property type="entry name" value="PRK05265.1-3"/>
    <property type="match status" value="1"/>
</dbReference>
<dbReference type="NCBIfam" id="NF003627">
    <property type="entry name" value="PRK05265.1-5"/>
    <property type="match status" value="1"/>
</dbReference>
<dbReference type="PANTHER" id="PTHR30456">
    <property type="entry name" value="PYRIDOXINE 5'-PHOSPHATE SYNTHASE"/>
    <property type="match status" value="1"/>
</dbReference>
<dbReference type="PANTHER" id="PTHR30456:SF0">
    <property type="entry name" value="PYRIDOXINE 5'-PHOSPHATE SYNTHASE"/>
    <property type="match status" value="1"/>
</dbReference>
<dbReference type="Pfam" id="PF03740">
    <property type="entry name" value="PdxJ"/>
    <property type="match status" value="1"/>
</dbReference>
<dbReference type="SUPFAM" id="SSF63892">
    <property type="entry name" value="Pyridoxine 5'-phosphate synthase"/>
    <property type="match status" value="1"/>
</dbReference>
<protein>
    <recommendedName>
        <fullName evidence="1">Pyridoxine 5'-phosphate synthase</fullName>
        <shortName evidence="1">PNP synthase</shortName>
        <ecNumber evidence="1">2.6.99.2</ecNumber>
    </recommendedName>
</protein>
<organism>
    <name type="scientific">Aquifex pyrophilus</name>
    <dbReference type="NCBI Taxonomy" id="2714"/>
    <lineage>
        <taxon>Bacteria</taxon>
        <taxon>Pseudomonadati</taxon>
        <taxon>Aquificota</taxon>
        <taxon>Aquificia</taxon>
        <taxon>Aquificales</taxon>
        <taxon>Aquificaceae</taxon>
        <taxon>Aquifex</taxon>
    </lineage>
</organism>
<sequence>MRLGVNVDHVATVRQARRTFEPSPVCAALIAQQAGADQITLHLREDRRHIQDRDLELIKELVNIPVNLEMAPTEEMREIALRVRPDRITLVPERREEITTEGGLDVVSMKERLKEYLKPLKEAGIEISLFIEPDKEQIEASRDVGADAIEIHTGRYQPLERHRFEEAREELRRIREAAIYARERGLRVYAGHGLTYHNVKEFVRELKDVVEELNIGHSIVANAVIFGFERAVKEMI</sequence>
<comment type="function">
    <text evidence="1">Catalyzes the complicated ring closure reaction between the two acyclic compounds 1-deoxy-D-xylulose-5-phosphate (DXP) and 3-amino-2-oxopropyl phosphate (1-amino-acetone-3-phosphate or AAP) to form pyridoxine 5'-phosphate (PNP) and inorganic phosphate.</text>
</comment>
<comment type="catalytic activity">
    <reaction evidence="1">
        <text>3-amino-2-oxopropyl phosphate + 1-deoxy-D-xylulose 5-phosphate = pyridoxine 5'-phosphate + phosphate + 2 H2O + H(+)</text>
        <dbReference type="Rhea" id="RHEA:15265"/>
        <dbReference type="ChEBI" id="CHEBI:15377"/>
        <dbReference type="ChEBI" id="CHEBI:15378"/>
        <dbReference type="ChEBI" id="CHEBI:43474"/>
        <dbReference type="ChEBI" id="CHEBI:57279"/>
        <dbReference type="ChEBI" id="CHEBI:57792"/>
        <dbReference type="ChEBI" id="CHEBI:58589"/>
        <dbReference type="EC" id="2.6.99.2"/>
    </reaction>
</comment>
<comment type="pathway">
    <text evidence="1">Cofactor biosynthesis; pyridoxine 5'-phosphate biosynthesis; pyridoxine 5'-phosphate from D-erythrose 4-phosphate: step 5/5.</text>
</comment>
<comment type="subunit">
    <text evidence="1">Homooctamer; tetramer of dimers.</text>
</comment>
<comment type="subcellular location">
    <subcellularLocation>
        <location evidence="1">Cytoplasm</location>
    </subcellularLocation>
</comment>
<comment type="similarity">
    <text evidence="1">Belongs to the PNP synthase family.</text>
</comment>
<reference key="1">
    <citation type="journal article" date="1995" name="J. Mol. Evol.">
        <title>Arrangement and nucleotide sequence of the gene (fus) encoding elongation factor G (EF-G) from the hyperthermophilic bacterium Aquifex pyrophilus: phylogenetic depth of hyperthermophilic bacteria inferred from analysis of the EF-G/fus sequences.</title>
        <authorList>
            <person name="Bocchetta M."/>
            <person name="Ceccarelli E."/>
            <person name="Creti R."/>
            <person name="Sanangelantoni A.M."/>
            <person name="Tiboni O."/>
            <person name="Cammarano P."/>
        </authorList>
    </citation>
    <scope>NUCLEOTIDE SEQUENCE [GENOMIC DNA]</scope>
    <source>
        <strain>DSM 6858 / JCM 9492 / Kol5A</strain>
    </source>
</reference>
<gene>
    <name evidence="1" type="primary">pdxJ</name>
</gene>